<comment type="function">
    <text>This enzyme catalyzes the endohydrolysis of 1,4-beta-glucosidic linkages in cellulose, lichenin and cereal beta-D-glucans.</text>
</comment>
<comment type="catalytic activity">
    <reaction>
        <text>Endohydrolysis of (1-&gt;4)-beta-D-glucosidic linkages in cellulose, lichenin and cereal beta-D-glucans.</text>
        <dbReference type="EC" id="3.2.1.4"/>
    </reaction>
</comment>
<comment type="pathway">
    <text>Glycan metabolism; cellulose degradation.</text>
</comment>
<comment type="miscellaneous">
    <text>CelC has an unusual substrate range and displays features common to cellobiohydrolases by being able to cleave the agluconic bond of aryl-beta-glucosides.</text>
</comment>
<comment type="similarity">
    <text evidence="2">Belongs to the glycosyl hydrolase 5 (cellulase A) family.</text>
</comment>
<evidence type="ECO:0000269" key="1">
    <source>
    </source>
</evidence>
<evidence type="ECO:0000305" key="2"/>
<evidence type="ECO:0007829" key="3">
    <source>
        <dbReference type="PDB" id="1CEO"/>
    </source>
</evidence>
<protein>
    <recommendedName>
        <fullName>Endoglucanase C</fullName>
        <ecNumber>3.2.1.4</ecNumber>
    </recommendedName>
    <alternativeName>
        <fullName>Cellulase C</fullName>
    </alternativeName>
    <alternativeName>
        <fullName>Endo-1,4-beta-glucanase C</fullName>
        <shortName>EgC</shortName>
    </alternativeName>
</protein>
<proteinExistence type="evidence at protein level"/>
<accession>P0C2S3</accession>
<accession>P07985</accession>
<dbReference type="EC" id="3.2.1.4"/>
<dbReference type="EMBL" id="M19422">
    <property type="protein sequence ID" value="AAA23220.1"/>
    <property type="molecule type" value="Genomic_DNA"/>
</dbReference>
<dbReference type="PIR" id="JT0268">
    <property type="entry name" value="JT0268"/>
</dbReference>
<dbReference type="PDB" id="1CEC">
    <property type="method" value="X-ray"/>
    <property type="resolution" value="2.15 A"/>
    <property type="chains" value="A=1-343"/>
</dbReference>
<dbReference type="PDB" id="1CEN">
    <property type="method" value="X-ray"/>
    <property type="resolution" value="2.30 A"/>
    <property type="chains" value="A=1-343"/>
</dbReference>
<dbReference type="PDB" id="1CEO">
    <property type="method" value="X-ray"/>
    <property type="resolution" value="1.90 A"/>
    <property type="chains" value="A=1-343"/>
</dbReference>
<dbReference type="PDBsum" id="1CEC"/>
<dbReference type="PDBsum" id="1CEN"/>
<dbReference type="PDBsum" id="1CEO"/>
<dbReference type="SMR" id="P0C2S3"/>
<dbReference type="CAZy" id="GH5">
    <property type="family name" value="Glycoside Hydrolase Family 5"/>
</dbReference>
<dbReference type="UniPathway" id="UPA00696"/>
<dbReference type="EvolutionaryTrace" id="P0C2S3"/>
<dbReference type="GO" id="GO:0009986">
    <property type="term" value="C:cell surface"/>
    <property type="evidence" value="ECO:0007669"/>
    <property type="project" value="TreeGrafter"/>
</dbReference>
<dbReference type="GO" id="GO:0005576">
    <property type="term" value="C:extracellular region"/>
    <property type="evidence" value="ECO:0007669"/>
    <property type="project" value="TreeGrafter"/>
</dbReference>
<dbReference type="GO" id="GO:0008422">
    <property type="term" value="F:beta-glucosidase activity"/>
    <property type="evidence" value="ECO:0007669"/>
    <property type="project" value="TreeGrafter"/>
</dbReference>
<dbReference type="GO" id="GO:0008810">
    <property type="term" value="F:cellulase activity"/>
    <property type="evidence" value="ECO:0007669"/>
    <property type="project" value="UniProtKB-EC"/>
</dbReference>
<dbReference type="GO" id="GO:0030245">
    <property type="term" value="P:cellulose catabolic process"/>
    <property type="evidence" value="ECO:0007669"/>
    <property type="project" value="UniProtKB-UniPathway"/>
</dbReference>
<dbReference type="Gene3D" id="3.20.20.80">
    <property type="entry name" value="Glycosidases"/>
    <property type="match status" value="1"/>
</dbReference>
<dbReference type="InterPro" id="IPR001547">
    <property type="entry name" value="Glyco_hydro_5"/>
</dbReference>
<dbReference type="InterPro" id="IPR018087">
    <property type="entry name" value="Glyco_hydro_5_CS"/>
</dbReference>
<dbReference type="InterPro" id="IPR017853">
    <property type="entry name" value="Glycoside_hydrolase_SF"/>
</dbReference>
<dbReference type="InterPro" id="IPR050386">
    <property type="entry name" value="Glycosyl_hydrolase_5"/>
</dbReference>
<dbReference type="PANTHER" id="PTHR31297:SF41">
    <property type="entry name" value="ENDOGLUCANASE, PUTATIVE (AFU_ORTHOLOGUE AFUA_5G01830)-RELATED"/>
    <property type="match status" value="1"/>
</dbReference>
<dbReference type="PANTHER" id="PTHR31297">
    <property type="entry name" value="GLUCAN ENDO-1,6-BETA-GLUCOSIDASE B"/>
    <property type="match status" value="1"/>
</dbReference>
<dbReference type="Pfam" id="PF00150">
    <property type="entry name" value="Cellulase"/>
    <property type="match status" value="1"/>
</dbReference>
<dbReference type="SUPFAM" id="SSF51445">
    <property type="entry name" value="(Trans)glycosidases"/>
    <property type="match status" value="1"/>
</dbReference>
<dbReference type="PROSITE" id="PS00659">
    <property type="entry name" value="GLYCOSYL_HYDROL_F5"/>
    <property type="match status" value="1"/>
</dbReference>
<sequence length="343" mass="40954">MVSFKAGINLGGWISQYQVFSKEHFDTFITEKDIETIAEAGFDHVRLPFDYPIIESDDNVGEYKEDGLSYIDRCLEWCKKYNLGLVLDMHHAPGYRFQDFKTSTLFEDPNQQKRFVDIWRFLAKRYINEREHIAFELLNEVVEPDSTRWNKLMLEYIKAIREIDSTMWLYIGGNNYNSPDELKNLADIDDDYIVYNFHFYNPFFFTHQKAHWSESAMAYNRTVKYPGQYEGIEEFVKNNPKYSFMMELNNLKLNKELLRKDLKPAIEFREKKKCKLYCGEFGVIAIADLESRIKWHEDYISLLEEYDIGGAVWNYKKMDFEIYNEDRKPVSQELVNILARRKT</sequence>
<reference key="1">
    <citation type="journal article" date="1988" name="Gene">
        <title>Nucleotide sequence of the celC gene encoding endoglucanase C of Clostridium thermocellum.</title>
        <authorList>
            <person name="Schwarz W.H."/>
            <person name="Schimming S."/>
            <person name="Ruecknagel K.P."/>
            <person name="Burgschwaiger S."/>
            <person name="Kreil G."/>
            <person name="Staudenbauer W.L."/>
        </authorList>
    </citation>
    <scope>NUCLEOTIDE SEQUENCE [GENOMIC DNA]</scope>
</reference>
<reference key="2">
    <citation type="journal article" date="1993" name="J. Biol. Chem.">
        <title>Glu280 is the nucleophile in the active site of Clostridium thermocellum CelC, a family A endo-beta-1,4-glucanase.</title>
        <authorList>
            <person name="Wang Q."/>
            <person name="Tull D."/>
            <person name="Meinke A."/>
            <person name="Gilkes N.R."/>
            <person name="Warren R.A."/>
            <person name="Aebersold R."/>
            <person name="Withers S.G."/>
        </authorList>
    </citation>
    <scope>ACTIVE SITE GLU-280</scope>
</reference>
<reference key="3">
    <citation type="journal article" date="1995" name="Nat. Struct. Biol.">
        <title>A common protein fold and similar active site in two distinct families of beta-glycanases.</title>
        <authorList>
            <person name="Dominguez R."/>
            <person name="Souchon H."/>
            <person name="Spinelli S."/>
            <person name="Dauter Z."/>
            <person name="Wilson K.S."/>
            <person name="Chauvaux S."/>
            <person name="Beguin P."/>
            <person name="Alzari P.M."/>
        </authorList>
    </citation>
    <scope>X-RAY CRYSTALLOGRAPHY (2.15 ANGSTROMS)</scope>
</reference>
<reference key="4">
    <citation type="journal article" date="1996" name="J. Mol. Biol.">
        <title>The crystal structure of a family 5 endoglucanase mutant in complexed and uncomplexed forms reveals an induced fit activation mechanism.</title>
        <authorList>
            <person name="Dominguez R."/>
            <person name="Souchon H."/>
            <person name="Lascombe M.-B."/>
            <person name="Alzari P.M."/>
        </authorList>
    </citation>
    <scope>X-RAY CRYSTALLOGRAPHY (2.3 ANGSTROMS) OF MUTANT GLN-140</scope>
</reference>
<organism>
    <name type="scientific">Acetivibrio thermocellus</name>
    <name type="common">Hungateiclostridium thermocellum</name>
    <name type="synonym">Clostridium thermocellum</name>
    <dbReference type="NCBI Taxonomy" id="1515"/>
    <lineage>
        <taxon>Bacteria</taxon>
        <taxon>Bacillati</taxon>
        <taxon>Bacillota</taxon>
        <taxon>Clostridia</taxon>
        <taxon>Eubacteriales</taxon>
        <taxon>Oscillospiraceae</taxon>
        <taxon>Acetivibrio</taxon>
    </lineage>
</organism>
<keyword id="KW-0002">3D-structure</keyword>
<keyword id="KW-0119">Carbohydrate metabolism</keyword>
<keyword id="KW-0136">Cellulose degradation</keyword>
<keyword id="KW-0326">Glycosidase</keyword>
<keyword id="KW-0378">Hydrolase</keyword>
<keyword id="KW-0624">Polysaccharide degradation</keyword>
<feature type="chain" id="PRO_0000184047" description="Endoglucanase C">
    <location>
        <begin position="1"/>
        <end position="343"/>
    </location>
</feature>
<feature type="active site" description="Proton donor">
    <location>
        <position position="140"/>
    </location>
</feature>
<feature type="active site" description="Nucleophile" evidence="1">
    <location>
        <position position="280"/>
    </location>
</feature>
<feature type="strand" evidence="3">
    <location>
        <begin position="5"/>
        <end position="9"/>
    </location>
</feature>
<feature type="strand" evidence="3">
    <location>
        <begin position="13"/>
        <end position="16"/>
    </location>
</feature>
<feature type="helix" evidence="3">
    <location>
        <begin position="22"/>
        <end position="28"/>
    </location>
</feature>
<feature type="helix" evidence="3">
    <location>
        <begin position="31"/>
        <end position="40"/>
    </location>
</feature>
<feature type="strand" evidence="3">
    <location>
        <begin position="44"/>
        <end position="50"/>
    </location>
</feature>
<feature type="helix" evidence="3">
    <location>
        <begin position="51"/>
        <end position="53"/>
    </location>
</feature>
<feature type="strand" evidence="3">
    <location>
        <begin position="57"/>
        <end position="59"/>
    </location>
</feature>
<feature type="helix" evidence="3">
    <location>
        <begin position="65"/>
        <end position="80"/>
    </location>
</feature>
<feature type="strand" evidence="3">
    <location>
        <begin position="84"/>
        <end position="91"/>
    </location>
</feature>
<feature type="turn" evidence="3">
    <location>
        <begin position="105"/>
        <end position="107"/>
    </location>
</feature>
<feature type="helix" evidence="3">
    <location>
        <begin position="109"/>
        <end position="125"/>
    </location>
</feature>
<feature type="turn" evidence="3">
    <location>
        <begin position="126"/>
        <end position="128"/>
    </location>
</feature>
<feature type="strand" evidence="3">
    <location>
        <begin position="131"/>
        <end position="136"/>
    </location>
</feature>
<feature type="strand" evidence="3">
    <location>
        <begin position="144"/>
        <end position="146"/>
    </location>
</feature>
<feature type="helix" evidence="3">
    <location>
        <begin position="147"/>
        <end position="163"/>
    </location>
</feature>
<feature type="strand" evidence="3">
    <location>
        <begin position="169"/>
        <end position="172"/>
    </location>
</feature>
<feature type="helix" evidence="3">
    <location>
        <begin position="174"/>
        <end position="177"/>
    </location>
</feature>
<feature type="helix" evidence="3">
    <location>
        <begin position="179"/>
        <end position="184"/>
    </location>
</feature>
<feature type="strand" evidence="3">
    <location>
        <begin position="191"/>
        <end position="199"/>
    </location>
</feature>
<feature type="helix" evidence="3">
    <location>
        <begin position="203"/>
        <end position="206"/>
    </location>
</feature>
<feature type="turn" evidence="3">
    <location>
        <begin position="207"/>
        <end position="209"/>
    </location>
</feature>
<feature type="helix" evidence="3">
    <location>
        <begin position="214"/>
        <end position="219"/>
    </location>
</feature>
<feature type="strand" evidence="3">
    <location>
        <begin position="225"/>
        <end position="228"/>
    </location>
</feature>
<feature type="helix" evidence="3">
    <location>
        <begin position="232"/>
        <end position="238"/>
    </location>
</feature>
<feature type="helix" evidence="3">
    <location>
        <begin position="240"/>
        <end position="248"/>
    </location>
</feature>
<feature type="strand" evidence="3">
    <location>
        <begin position="252"/>
        <end position="254"/>
    </location>
</feature>
<feature type="helix" evidence="3">
    <location>
        <begin position="255"/>
        <end position="272"/>
    </location>
</feature>
<feature type="strand" evidence="3">
    <location>
        <begin position="275"/>
        <end position="281"/>
    </location>
</feature>
<feature type="helix" evidence="3">
    <location>
        <begin position="289"/>
        <end position="305"/>
    </location>
</feature>
<feature type="strand" evidence="3">
    <location>
        <begin position="309"/>
        <end position="313"/>
    </location>
</feature>
<feature type="strand" evidence="3">
    <location>
        <begin position="315"/>
        <end position="317"/>
    </location>
</feature>
<feature type="helix" evidence="3">
    <location>
        <begin position="332"/>
        <end position="339"/>
    </location>
</feature>
<name>GUNC_ACETH</name>
<gene>
    <name type="primary">celC</name>
</gene>